<feature type="chain" id="PRO_0000353756" description="Cytochrome c biogenesis protein CcsA">
    <location>
        <begin position="1"/>
        <end position="322"/>
    </location>
</feature>
<feature type="transmembrane region" description="Helical" evidence="1">
    <location>
        <begin position="9"/>
        <end position="29"/>
    </location>
</feature>
<feature type="transmembrane region" description="Helical" evidence="1">
    <location>
        <begin position="44"/>
        <end position="64"/>
    </location>
</feature>
<feature type="transmembrane region" description="Helical" evidence="1">
    <location>
        <begin position="71"/>
        <end position="91"/>
    </location>
</feature>
<feature type="transmembrane region" description="Helical" evidence="1">
    <location>
        <begin position="98"/>
        <end position="118"/>
    </location>
</feature>
<feature type="transmembrane region" description="Helical" evidence="1">
    <location>
        <begin position="143"/>
        <end position="163"/>
    </location>
</feature>
<feature type="transmembrane region" description="Helical" evidence="1">
    <location>
        <begin position="226"/>
        <end position="246"/>
    </location>
</feature>
<feature type="transmembrane region" description="Helical" evidence="1">
    <location>
        <begin position="253"/>
        <end position="273"/>
    </location>
</feature>
<feature type="transmembrane region" description="Helical" evidence="1">
    <location>
        <begin position="287"/>
        <end position="307"/>
    </location>
</feature>
<reference key="1">
    <citation type="submission" date="2008-03" db="EMBL/GenBank/DDBJ databases">
        <title>Guizotia abyssinica chloroplast sequenced using Solexa.</title>
        <authorList>
            <person name="Kane N.C."/>
            <person name="Dempewolf H."/>
            <person name="Stewart M.L."/>
            <person name="Cronk Q."/>
            <person name="Rieseberrg L.H."/>
        </authorList>
    </citation>
    <scope>NUCLEOTIDE SEQUENCE [LARGE SCALE GENOMIC DNA]</scope>
    <source>
        <strain>cv. PI 508077</strain>
    </source>
</reference>
<accession>B2LMP9</accession>
<comment type="function">
    <text evidence="1">Required during biogenesis of c-type cytochromes (cytochrome c6 and cytochrome f) at the step of heme attachment.</text>
</comment>
<comment type="subunit">
    <text evidence="1">May interact with Ccs1.</text>
</comment>
<comment type="subcellular location">
    <subcellularLocation>
        <location evidence="1">Plastid</location>
        <location evidence="1">Chloroplast thylakoid membrane</location>
        <topology evidence="1">Multi-pass membrane protein</topology>
    </subcellularLocation>
</comment>
<comment type="similarity">
    <text evidence="1">Belongs to the CcmF/CycK/Ccl1/NrfE/CcsA family.</text>
</comment>
<sequence>MIFSTLEHILTHISFSIVSIVITLHLITLLGNEIIKPYDSSEKGMIATFLCLTGLLITRWIYSGHFPLSDLYESFIFLSWSFSLIHIVPYFKIRKNDLTTITASSTIFTQGFATSGLLNEIHKPTILVPALQSEWLIMHVSMMILSYAALLCGSLLSVALLVITFRNIFYSSKSNNFLKLNESFSFGEIQYKNERNNIFQKTYFFSDKNYYKAQFIQQLDYWSYRVISLGFIFLTIGILSGAVWANEAWGSYWSWDPKETWAFITWIVFAIYLHTRTKKNLQGANSAIVATLGFLIIWICYFGVNLLGIGLHSYGSFTLTSS</sequence>
<dbReference type="EMBL" id="EU549769">
    <property type="protein sequence ID" value="ACB86582.1"/>
    <property type="molecule type" value="Genomic_DNA"/>
</dbReference>
<dbReference type="RefSeq" id="YP_001837416.1">
    <property type="nucleotide sequence ID" value="NC_010601.1"/>
</dbReference>
<dbReference type="SMR" id="B2LMP9"/>
<dbReference type="GeneID" id="6219213"/>
<dbReference type="GO" id="GO:0009535">
    <property type="term" value="C:chloroplast thylakoid membrane"/>
    <property type="evidence" value="ECO:0007669"/>
    <property type="project" value="UniProtKB-SubCell"/>
</dbReference>
<dbReference type="GO" id="GO:0005886">
    <property type="term" value="C:plasma membrane"/>
    <property type="evidence" value="ECO:0007669"/>
    <property type="project" value="TreeGrafter"/>
</dbReference>
<dbReference type="GO" id="GO:0020037">
    <property type="term" value="F:heme binding"/>
    <property type="evidence" value="ECO:0007669"/>
    <property type="project" value="InterPro"/>
</dbReference>
<dbReference type="GO" id="GO:0017004">
    <property type="term" value="P:cytochrome complex assembly"/>
    <property type="evidence" value="ECO:0007669"/>
    <property type="project" value="UniProtKB-UniRule"/>
</dbReference>
<dbReference type="HAMAP" id="MF_01391">
    <property type="entry name" value="CytC_CcsA"/>
    <property type="match status" value="1"/>
</dbReference>
<dbReference type="InterPro" id="IPR002541">
    <property type="entry name" value="Cyt_c_assembly"/>
</dbReference>
<dbReference type="InterPro" id="IPR017562">
    <property type="entry name" value="Cyt_c_biogenesis_CcsA"/>
</dbReference>
<dbReference type="InterPro" id="IPR045062">
    <property type="entry name" value="Cyt_c_biogenesis_CcsA/CcmC"/>
</dbReference>
<dbReference type="NCBIfam" id="TIGR03144">
    <property type="entry name" value="cytochr_II_ccsB"/>
    <property type="match status" value="1"/>
</dbReference>
<dbReference type="PANTHER" id="PTHR30071:SF1">
    <property type="entry name" value="CYTOCHROME B_B6 PROTEIN-RELATED"/>
    <property type="match status" value="1"/>
</dbReference>
<dbReference type="PANTHER" id="PTHR30071">
    <property type="entry name" value="HEME EXPORTER PROTEIN C"/>
    <property type="match status" value="1"/>
</dbReference>
<dbReference type="Pfam" id="PF01578">
    <property type="entry name" value="Cytochrom_C_asm"/>
    <property type="match status" value="1"/>
</dbReference>
<keyword id="KW-0150">Chloroplast</keyword>
<keyword id="KW-0201">Cytochrome c-type biogenesis</keyword>
<keyword id="KW-0472">Membrane</keyword>
<keyword id="KW-0934">Plastid</keyword>
<keyword id="KW-0793">Thylakoid</keyword>
<keyword id="KW-0812">Transmembrane</keyword>
<keyword id="KW-1133">Transmembrane helix</keyword>
<evidence type="ECO:0000255" key="1">
    <source>
        <dbReference type="HAMAP-Rule" id="MF_01391"/>
    </source>
</evidence>
<proteinExistence type="inferred from homology"/>
<organism>
    <name type="scientific">Guizotia abyssinica</name>
    <name type="common">Niger</name>
    <name type="synonym">Ramtilla</name>
    <dbReference type="NCBI Taxonomy" id="4230"/>
    <lineage>
        <taxon>Eukaryota</taxon>
        <taxon>Viridiplantae</taxon>
        <taxon>Streptophyta</taxon>
        <taxon>Embryophyta</taxon>
        <taxon>Tracheophyta</taxon>
        <taxon>Spermatophyta</taxon>
        <taxon>Magnoliopsida</taxon>
        <taxon>eudicotyledons</taxon>
        <taxon>Gunneridae</taxon>
        <taxon>Pentapetalae</taxon>
        <taxon>asterids</taxon>
        <taxon>campanulids</taxon>
        <taxon>Asterales</taxon>
        <taxon>Asteraceae</taxon>
        <taxon>Asteroideae</taxon>
        <taxon>Heliantheae alliance</taxon>
        <taxon>Millerieae</taxon>
        <taxon>Guizotia</taxon>
    </lineage>
</organism>
<name>CCSA_GUIAB</name>
<protein>
    <recommendedName>
        <fullName evidence="1">Cytochrome c biogenesis protein CcsA</fullName>
    </recommendedName>
</protein>
<geneLocation type="chloroplast"/>
<gene>
    <name evidence="1" type="primary">ccsA</name>
    <name type="ordered locus">GuabCp078</name>
</gene>